<organism>
    <name type="scientific">Chara globularis</name>
    <name type="common">Fragile stonewort</name>
    <dbReference type="NCBI Taxonomy" id="69338"/>
    <lineage>
        <taxon>Eukaryota</taxon>
        <taxon>Viridiplantae</taxon>
        <taxon>Streptophyta</taxon>
        <taxon>Charophyceae</taxon>
        <taxon>Charales</taxon>
        <taxon>Characeae</taxon>
        <taxon>Chara</taxon>
    </lineage>
</organism>
<keyword id="KW-0150">Chloroplast</keyword>
<keyword id="KW-0507">mRNA processing</keyword>
<keyword id="KW-0934">Plastid</keyword>
<keyword id="KW-0694">RNA-binding</keyword>
<keyword id="KW-0819">tRNA processing</keyword>
<feature type="chain" id="PRO_0000143328" description="Maturase K">
    <location>
        <begin position="1"/>
        <end position="516"/>
    </location>
</feature>
<proteinExistence type="inferred from homology"/>
<reference key="1">
    <citation type="journal article" date="2003" name="Am. J. Bot.">
        <title>Occurrence of matK in a trnK group II intron in charophyte green algae and phylogeny of the Characeae.</title>
        <authorList>
            <person name="Sanders E.R."/>
            <person name="Karol K.G."/>
            <person name="McCourt R.M."/>
        </authorList>
    </citation>
    <scope>NUCLEOTIDE SEQUENCE [GENOMIC DNA]</scope>
    <source>
        <strain>F124C</strain>
    </source>
</reference>
<sequence>MNLISKKNELKQGFYPLFFLEEFYIRVLIHMNHNHILKIGNIKQSKLIHVNRICHYLLIKRLIRQIRKQSHKYNGISEFPNYETEFYFQYKNRFYNLMIENVFLLILQMIWQHQKTRKNDPCILIHRSIQSTFPFLENKIIHCIWIIHGNIQLFHTIQQLNFLFLLLYERIRDKSFLHLLKNIFNLKKELLIEAFYCDKFHLIELSMFFRNLYINEFDSFIVYHIVKTWKLAYLLNPSQAIDDSSFIQKNHILLNIKRKQKSLPLVSWLANRSFYSLYGNIHYVRRDLSFLMAIQAGKHISRFWKYNSINFLQLKLGFPCSLDVLYLKSLFNQDFLFLGYRIVNKLWKKNFKIRAVSWYSPILFFFKGRRISTKMPVLNLIHRLSVMHLCNLEGYPIHKAAWSVFNDKQIMNIFSNLLRNIILYYSGCSNRSDLGKIQYILEFSCMKTLAFKHKSSIRSTWTQYKKHVSLLSLVKNRHKNGKTSVDLYFLFQKTNKLWLLDLSKIQDSLACFIFID</sequence>
<protein>
    <recommendedName>
        <fullName evidence="1">Maturase K</fullName>
    </recommendedName>
    <alternativeName>
        <fullName evidence="1">Intron maturase</fullName>
    </alternativeName>
</protein>
<geneLocation type="chloroplast"/>
<evidence type="ECO:0000255" key="1">
    <source>
        <dbReference type="HAMAP-Rule" id="MF_01390"/>
    </source>
</evidence>
<accession>Q7YKY4</accession>
<comment type="function">
    <text evidence="1">Usually encoded in the trnK tRNA gene intron. Probably assists in splicing its own and other chloroplast group II introns.</text>
</comment>
<comment type="subcellular location">
    <subcellularLocation>
        <location>Plastid</location>
        <location>Chloroplast</location>
    </subcellularLocation>
</comment>
<comment type="similarity">
    <text evidence="1">Belongs to the intron maturase 2 family. MatK subfamily.</text>
</comment>
<gene>
    <name evidence="1" type="primary">matK</name>
</gene>
<name>MATK_CHAGO</name>
<dbReference type="EMBL" id="AY170443">
    <property type="protein sequence ID" value="AAO39154.1"/>
    <property type="molecule type" value="Genomic_DNA"/>
</dbReference>
<dbReference type="GO" id="GO:0009507">
    <property type="term" value="C:chloroplast"/>
    <property type="evidence" value="ECO:0007669"/>
    <property type="project" value="UniProtKB-SubCell"/>
</dbReference>
<dbReference type="GO" id="GO:0003723">
    <property type="term" value="F:RNA binding"/>
    <property type="evidence" value="ECO:0007669"/>
    <property type="project" value="UniProtKB-KW"/>
</dbReference>
<dbReference type="GO" id="GO:0006397">
    <property type="term" value="P:mRNA processing"/>
    <property type="evidence" value="ECO:0007669"/>
    <property type="project" value="UniProtKB-KW"/>
</dbReference>
<dbReference type="GO" id="GO:0008380">
    <property type="term" value="P:RNA splicing"/>
    <property type="evidence" value="ECO:0007669"/>
    <property type="project" value="UniProtKB-UniRule"/>
</dbReference>
<dbReference type="GO" id="GO:0008033">
    <property type="term" value="P:tRNA processing"/>
    <property type="evidence" value="ECO:0007669"/>
    <property type="project" value="UniProtKB-KW"/>
</dbReference>
<dbReference type="HAMAP" id="MF_01390">
    <property type="entry name" value="MatK"/>
    <property type="match status" value="1"/>
</dbReference>
<dbReference type="InterPro" id="IPR024937">
    <property type="entry name" value="Domain_X"/>
</dbReference>
<dbReference type="InterPro" id="IPR002866">
    <property type="entry name" value="Maturase_MatK"/>
</dbReference>
<dbReference type="InterPro" id="IPR024942">
    <property type="entry name" value="Maturase_MatK_N"/>
</dbReference>
<dbReference type="PANTHER" id="PTHR34811">
    <property type="entry name" value="MATURASE K"/>
    <property type="match status" value="1"/>
</dbReference>
<dbReference type="PANTHER" id="PTHR34811:SF1">
    <property type="entry name" value="MATURASE K"/>
    <property type="match status" value="1"/>
</dbReference>
<dbReference type="Pfam" id="PF01348">
    <property type="entry name" value="Intron_maturas2"/>
    <property type="match status" value="1"/>
</dbReference>
<dbReference type="Pfam" id="PF01824">
    <property type="entry name" value="MatK_N"/>
    <property type="match status" value="1"/>
</dbReference>